<keyword id="KW-0240">DNA-directed RNA polymerase</keyword>
<keyword id="KW-0548">Nucleotidyltransferase</keyword>
<keyword id="KW-0804">Transcription</keyword>
<keyword id="KW-0808">Transferase</keyword>
<gene>
    <name evidence="1" type="primary">rpoA</name>
    <name type="ordered locus">BMEI0781</name>
</gene>
<protein>
    <recommendedName>
        <fullName evidence="1">DNA-directed RNA polymerase subunit alpha</fullName>
        <shortName evidence="1">RNAP subunit alpha</shortName>
        <ecNumber evidence="1">2.7.7.6</ecNumber>
    </recommendedName>
    <alternativeName>
        <fullName evidence="1">RNA polymerase subunit alpha</fullName>
    </alternativeName>
    <alternativeName>
        <fullName evidence="1">Transcriptase subunit alpha</fullName>
    </alternativeName>
</protein>
<reference key="1">
    <citation type="journal article" date="2002" name="Proc. Natl. Acad. Sci. U.S.A.">
        <title>The genome sequence of the facultative intracellular pathogen Brucella melitensis.</title>
        <authorList>
            <person name="DelVecchio V.G."/>
            <person name="Kapatral V."/>
            <person name="Redkar R.J."/>
            <person name="Patra G."/>
            <person name="Mujer C."/>
            <person name="Los T."/>
            <person name="Ivanova N."/>
            <person name="Anderson I."/>
            <person name="Bhattacharyya A."/>
            <person name="Lykidis A."/>
            <person name="Reznik G."/>
            <person name="Jablonski L."/>
            <person name="Larsen N."/>
            <person name="D'Souza M."/>
            <person name="Bernal A."/>
            <person name="Mazur M."/>
            <person name="Goltsman E."/>
            <person name="Selkov E."/>
            <person name="Elzer P.H."/>
            <person name="Hagius S."/>
            <person name="O'Callaghan D."/>
            <person name="Letesson J.-J."/>
            <person name="Haselkorn R."/>
            <person name="Kyrpides N.C."/>
            <person name="Overbeek R."/>
        </authorList>
    </citation>
    <scope>NUCLEOTIDE SEQUENCE [LARGE SCALE GENOMIC DNA]</scope>
    <source>
        <strain>ATCC 23456 / CCUG 17765 / NCTC 10094 / 16M</strain>
    </source>
</reference>
<proteinExistence type="inferred from homology"/>
<name>RPOA_BRUME</name>
<sequence length="337" mass="37313">MIQKNWQELIKPNKVDFITHGSRTHATVVAEPLERGFGLTLGNALRRVLLSSLRGAAVTAVQIDGVLHEFSSIPGVREDVTDIVLNIKEIAIRMEGEGPKRMVVHKEGPGVVTAGDIQTVGDVEILNPEHVICTLDEGAEIRMEFTVNTGKGYVPADCNRAEDAPIGLIPVDSLYSPVRKVSYKIENTREGQVLDYDKLTLNIETNGSVTGEDAVAYAARILQDQLSIFVNFEEPQKEAPQEQVAELAFNPALLKKVDELELSVRSANCLKNDNIVYIGDLIQKTEAEMLRTPNFGRKSLNEIKEVLASMGLHLGMEIPAWPPENIEDLAKRYEDQY</sequence>
<dbReference type="EC" id="2.7.7.6" evidence="1"/>
<dbReference type="EMBL" id="AE008917">
    <property type="protein sequence ID" value="AAL51962.1"/>
    <property type="molecule type" value="Genomic_DNA"/>
</dbReference>
<dbReference type="PIR" id="AG3349">
    <property type="entry name" value="AG3349"/>
</dbReference>
<dbReference type="RefSeq" id="WP_004683917.1">
    <property type="nucleotide sequence ID" value="NZ_GG703780.1"/>
</dbReference>
<dbReference type="SMR" id="Q8YHL6"/>
<dbReference type="GeneID" id="29593593"/>
<dbReference type="KEGG" id="bme:BMEI0781"/>
<dbReference type="KEGG" id="bmel:DK63_641"/>
<dbReference type="PATRIC" id="fig|224914.52.peg.672"/>
<dbReference type="eggNOG" id="COG0202">
    <property type="taxonomic scope" value="Bacteria"/>
</dbReference>
<dbReference type="PhylomeDB" id="Q8YHL6"/>
<dbReference type="Proteomes" id="UP000000419">
    <property type="component" value="Chromosome I"/>
</dbReference>
<dbReference type="GO" id="GO:0005737">
    <property type="term" value="C:cytoplasm"/>
    <property type="evidence" value="ECO:0007669"/>
    <property type="project" value="UniProtKB-ARBA"/>
</dbReference>
<dbReference type="GO" id="GO:0000428">
    <property type="term" value="C:DNA-directed RNA polymerase complex"/>
    <property type="evidence" value="ECO:0007669"/>
    <property type="project" value="UniProtKB-KW"/>
</dbReference>
<dbReference type="GO" id="GO:0003677">
    <property type="term" value="F:DNA binding"/>
    <property type="evidence" value="ECO:0007669"/>
    <property type="project" value="UniProtKB-UniRule"/>
</dbReference>
<dbReference type="GO" id="GO:0003899">
    <property type="term" value="F:DNA-directed RNA polymerase activity"/>
    <property type="evidence" value="ECO:0007669"/>
    <property type="project" value="UniProtKB-UniRule"/>
</dbReference>
<dbReference type="GO" id="GO:0046983">
    <property type="term" value="F:protein dimerization activity"/>
    <property type="evidence" value="ECO:0007669"/>
    <property type="project" value="InterPro"/>
</dbReference>
<dbReference type="GO" id="GO:0006351">
    <property type="term" value="P:DNA-templated transcription"/>
    <property type="evidence" value="ECO:0007669"/>
    <property type="project" value="UniProtKB-UniRule"/>
</dbReference>
<dbReference type="CDD" id="cd06928">
    <property type="entry name" value="RNAP_alpha_NTD"/>
    <property type="match status" value="1"/>
</dbReference>
<dbReference type="FunFam" id="1.10.150.20:FF:000001">
    <property type="entry name" value="DNA-directed RNA polymerase subunit alpha"/>
    <property type="match status" value="1"/>
</dbReference>
<dbReference type="FunFam" id="2.170.120.12:FF:000001">
    <property type="entry name" value="DNA-directed RNA polymerase subunit alpha"/>
    <property type="match status" value="1"/>
</dbReference>
<dbReference type="Gene3D" id="1.10.150.20">
    <property type="entry name" value="5' to 3' exonuclease, C-terminal subdomain"/>
    <property type="match status" value="1"/>
</dbReference>
<dbReference type="Gene3D" id="2.170.120.12">
    <property type="entry name" value="DNA-directed RNA polymerase, insert domain"/>
    <property type="match status" value="1"/>
</dbReference>
<dbReference type="Gene3D" id="3.30.1360.10">
    <property type="entry name" value="RNA polymerase, RBP11-like subunit"/>
    <property type="match status" value="1"/>
</dbReference>
<dbReference type="HAMAP" id="MF_00059">
    <property type="entry name" value="RNApol_bact_RpoA"/>
    <property type="match status" value="1"/>
</dbReference>
<dbReference type="InterPro" id="IPR011262">
    <property type="entry name" value="DNA-dir_RNA_pol_insert"/>
</dbReference>
<dbReference type="InterPro" id="IPR011263">
    <property type="entry name" value="DNA-dir_RNA_pol_RpoA/D/Rpb3"/>
</dbReference>
<dbReference type="InterPro" id="IPR011773">
    <property type="entry name" value="DNA-dir_RpoA"/>
</dbReference>
<dbReference type="InterPro" id="IPR036603">
    <property type="entry name" value="RBP11-like"/>
</dbReference>
<dbReference type="InterPro" id="IPR011260">
    <property type="entry name" value="RNAP_asu_C"/>
</dbReference>
<dbReference type="InterPro" id="IPR036643">
    <property type="entry name" value="RNApol_insert_sf"/>
</dbReference>
<dbReference type="NCBIfam" id="NF003513">
    <property type="entry name" value="PRK05182.1-2"/>
    <property type="match status" value="1"/>
</dbReference>
<dbReference type="NCBIfam" id="NF003519">
    <property type="entry name" value="PRK05182.2-5"/>
    <property type="match status" value="1"/>
</dbReference>
<dbReference type="NCBIfam" id="TIGR02027">
    <property type="entry name" value="rpoA"/>
    <property type="match status" value="1"/>
</dbReference>
<dbReference type="Pfam" id="PF01000">
    <property type="entry name" value="RNA_pol_A_bac"/>
    <property type="match status" value="1"/>
</dbReference>
<dbReference type="Pfam" id="PF03118">
    <property type="entry name" value="RNA_pol_A_CTD"/>
    <property type="match status" value="1"/>
</dbReference>
<dbReference type="Pfam" id="PF01193">
    <property type="entry name" value="RNA_pol_L"/>
    <property type="match status" value="1"/>
</dbReference>
<dbReference type="SMART" id="SM00662">
    <property type="entry name" value="RPOLD"/>
    <property type="match status" value="1"/>
</dbReference>
<dbReference type="SUPFAM" id="SSF47789">
    <property type="entry name" value="C-terminal domain of RNA polymerase alpha subunit"/>
    <property type="match status" value="1"/>
</dbReference>
<dbReference type="SUPFAM" id="SSF56553">
    <property type="entry name" value="Insert subdomain of RNA polymerase alpha subunit"/>
    <property type="match status" value="1"/>
</dbReference>
<dbReference type="SUPFAM" id="SSF55257">
    <property type="entry name" value="RBP11-like subunits of RNA polymerase"/>
    <property type="match status" value="1"/>
</dbReference>
<comment type="function">
    <text evidence="1">DNA-dependent RNA polymerase catalyzes the transcription of DNA into RNA using the four ribonucleoside triphosphates as substrates.</text>
</comment>
<comment type="catalytic activity">
    <reaction evidence="1">
        <text>RNA(n) + a ribonucleoside 5'-triphosphate = RNA(n+1) + diphosphate</text>
        <dbReference type="Rhea" id="RHEA:21248"/>
        <dbReference type="Rhea" id="RHEA-COMP:14527"/>
        <dbReference type="Rhea" id="RHEA-COMP:17342"/>
        <dbReference type="ChEBI" id="CHEBI:33019"/>
        <dbReference type="ChEBI" id="CHEBI:61557"/>
        <dbReference type="ChEBI" id="CHEBI:140395"/>
        <dbReference type="EC" id="2.7.7.6"/>
    </reaction>
</comment>
<comment type="subunit">
    <text evidence="1">Homodimer. The RNAP catalytic core consists of 2 alpha, 1 beta, 1 beta' and 1 omega subunit. When a sigma factor is associated with the core the holoenzyme is formed, which can initiate transcription.</text>
</comment>
<comment type="domain">
    <text evidence="1">The N-terminal domain is essential for RNAP assembly and basal transcription, whereas the C-terminal domain is involved in interaction with transcriptional regulators and with upstream promoter elements.</text>
</comment>
<comment type="similarity">
    <text evidence="1">Belongs to the RNA polymerase alpha chain family.</text>
</comment>
<organism>
    <name type="scientific">Brucella melitensis biotype 1 (strain ATCC 23456 / CCUG 17765 / NCTC 10094 / 16M)</name>
    <dbReference type="NCBI Taxonomy" id="224914"/>
    <lineage>
        <taxon>Bacteria</taxon>
        <taxon>Pseudomonadati</taxon>
        <taxon>Pseudomonadota</taxon>
        <taxon>Alphaproteobacteria</taxon>
        <taxon>Hyphomicrobiales</taxon>
        <taxon>Brucellaceae</taxon>
        <taxon>Brucella/Ochrobactrum group</taxon>
        <taxon>Brucella</taxon>
    </lineage>
</organism>
<accession>Q8YHL6</accession>
<feature type="chain" id="PRO_0000175277" description="DNA-directed RNA polymerase subunit alpha">
    <location>
        <begin position="1"/>
        <end position="337"/>
    </location>
</feature>
<feature type="region of interest" description="Alpha N-terminal domain (alpha-NTD)" evidence="1">
    <location>
        <begin position="1"/>
        <end position="233"/>
    </location>
</feature>
<feature type="region of interest" description="Alpha C-terminal domain (alpha-CTD)" evidence="1">
    <location>
        <begin position="249"/>
        <end position="337"/>
    </location>
</feature>
<evidence type="ECO:0000255" key="1">
    <source>
        <dbReference type="HAMAP-Rule" id="MF_00059"/>
    </source>
</evidence>